<protein>
    <recommendedName>
        <fullName evidence="1">D-aminoacyl-tRNA deacylase</fullName>
        <shortName evidence="1">DTD</shortName>
        <ecNumber evidence="1">3.1.1.96</ecNumber>
    </recommendedName>
    <alternativeName>
        <fullName evidence="1">Gly-tRNA(Ala) deacylase</fullName>
    </alternativeName>
</protein>
<organism>
    <name type="scientific">Clostridium acetobutylicum (strain ATCC 824 / DSM 792 / JCM 1419 / IAM 19013 / LMG 5710 / NBRC 13948 / NRRL B-527 / VKM B-1787 / 2291 / W)</name>
    <dbReference type="NCBI Taxonomy" id="272562"/>
    <lineage>
        <taxon>Bacteria</taxon>
        <taxon>Bacillati</taxon>
        <taxon>Bacillota</taxon>
        <taxon>Clostridia</taxon>
        <taxon>Eubacteriales</taxon>
        <taxon>Clostridiaceae</taxon>
        <taxon>Clostridium</taxon>
    </lineage>
</organism>
<name>DTD_CLOAB</name>
<keyword id="KW-0963">Cytoplasm</keyword>
<keyword id="KW-0378">Hydrolase</keyword>
<keyword id="KW-1185">Reference proteome</keyword>
<keyword id="KW-0694">RNA-binding</keyword>
<keyword id="KW-0820">tRNA-binding</keyword>
<feature type="chain" id="PRO_0000164530" description="D-aminoacyl-tRNA deacylase">
    <location>
        <begin position="1"/>
        <end position="149"/>
    </location>
</feature>
<feature type="short sequence motif" description="Gly-cisPro motif, important for rejection of L-amino acids" evidence="1">
    <location>
        <begin position="137"/>
        <end position="138"/>
    </location>
</feature>
<dbReference type="EC" id="3.1.1.96" evidence="1"/>
<dbReference type="EMBL" id="AE001437">
    <property type="protein sequence ID" value="AAK80230.1"/>
    <property type="molecule type" value="Genomic_DNA"/>
</dbReference>
<dbReference type="PIR" id="C97180">
    <property type="entry name" value="C97180"/>
</dbReference>
<dbReference type="RefSeq" id="NP_348890.1">
    <property type="nucleotide sequence ID" value="NC_003030.1"/>
</dbReference>
<dbReference type="RefSeq" id="WP_010965571.1">
    <property type="nucleotide sequence ID" value="NC_003030.1"/>
</dbReference>
<dbReference type="SMR" id="Q97GU2"/>
<dbReference type="STRING" id="272562.CA_C2273"/>
<dbReference type="GeneID" id="44998750"/>
<dbReference type="KEGG" id="cac:CA_C2273"/>
<dbReference type="PATRIC" id="fig|272562.8.peg.2471"/>
<dbReference type="eggNOG" id="COG1490">
    <property type="taxonomic scope" value="Bacteria"/>
</dbReference>
<dbReference type="HOGENOM" id="CLU_076901_1_0_9"/>
<dbReference type="OrthoDB" id="9801395at2"/>
<dbReference type="Proteomes" id="UP000000814">
    <property type="component" value="Chromosome"/>
</dbReference>
<dbReference type="GO" id="GO:0005737">
    <property type="term" value="C:cytoplasm"/>
    <property type="evidence" value="ECO:0007669"/>
    <property type="project" value="UniProtKB-SubCell"/>
</dbReference>
<dbReference type="GO" id="GO:0051500">
    <property type="term" value="F:D-tyrosyl-tRNA(Tyr) deacylase activity"/>
    <property type="evidence" value="ECO:0007669"/>
    <property type="project" value="TreeGrafter"/>
</dbReference>
<dbReference type="GO" id="GO:0106026">
    <property type="term" value="F:Gly-tRNA(Ala) deacylase activity"/>
    <property type="evidence" value="ECO:0007669"/>
    <property type="project" value="UniProtKB-UniRule"/>
</dbReference>
<dbReference type="GO" id="GO:0043908">
    <property type="term" value="F:Ser(Gly)-tRNA(Ala) hydrolase activity"/>
    <property type="evidence" value="ECO:0007669"/>
    <property type="project" value="UniProtKB-UniRule"/>
</dbReference>
<dbReference type="GO" id="GO:0000049">
    <property type="term" value="F:tRNA binding"/>
    <property type="evidence" value="ECO:0007669"/>
    <property type="project" value="UniProtKB-UniRule"/>
</dbReference>
<dbReference type="GO" id="GO:0019478">
    <property type="term" value="P:D-amino acid catabolic process"/>
    <property type="evidence" value="ECO:0007669"/>
    <property type="project" value="UniProtKB-UniRule"/>
</dbReference>
<dbReference type="CDD" id="cd00563">
    <property type="entry name" value="Dtyr_deacylase"/>
    <property type="match status" value="1"/>
</dbReference>
<dbReference type="FunFam" id="3.50.80.10:FF:000001">
    <property type="entry name" value="D-aminoacyl-tRNA deacylase"/>
    <property type="match status" value="1"/>
</dbReference>
<dbReference type="Gene3D" id="3.50.80.10">
    <property type="entry name" value="D-tyrosyl-tRNA(Tyr) deacylase"/>
    <property type="match status" value="1"/>
</dbReference>
<dbReference type="HAMAP" id="MF_00518">
    <property type="entry name" value="Deacylase_Dtd"/>
    <property type="match status" value="1"/>
</dbReference>
<dbReference type="InterPro" id="IPR003732">
    <property type="entry name" value="Daa-tRNA_deacyls_DTD"/>
</dbReference>
<dbReference type="InterPro" id="IPR023509">
    <property type="entry name" value="DTD-like_sf"/>
</dbReference>
<dbReference type="NCBIfam" id="TIGR00256">
    <property type="entry name" value="D-aminoacyl-tRNA deacylase"/>
    <property type="match status" value="1"/>
</dbReference>
<dbReference type="PANTHER" id="PTHR10472:SF5">
    <property type="entry name" value="D-AMINOACYL-TRNA DEACYLASE 1"/>
    <property type="match status" value="1"/>
</dbReference>
<dbReference type="PANTHER" id="PTHR10472">
    <property type="entry name" value="D-TYROSYL-TRNA TYR DEACYLASE"/>
    <property type="match status" value="1"/>
</dbReference>
<dbReference type="Pfam" id="PF02580">
    <property type="entry name" value="Tyr_Deacylase"/>
    <property type="match status" value="1"/>
</dbReference>
<dbReference type="SUPFAM" id="SSF69500">
    <property type="entry name" value="DTD-like"/>
    <property type="match status" value="1"/>
</dbReference>
<sequence>MRAVVQKVKKSSVKVDGKVVGQIGKGINALIGITEGDTLEDIEYLKNKILNLRIFEDEEGKLNKSLKDVNGELLVISQFTLYGDCRRGRRPSFIEALSGDKSEKIYNDFVDLCRKEVPNVQTGVFGAHMDVDIQNDGPVTLLIDSKKVF</sequence>
<comment type="function">
    <text evidence="1">An aminoacyl-tRNA editing enzyme that deacylates mischarged D-aminoacyl-tRNAs. Also deacylates mischarged glycyl-tRNA(Ala), protecting cells against glycine mischarging by AlaRS. Acts via tRNA-based rather than protein-based catalysis; rejects L-amino acids rather than detecting D-amino acids in the active site. By recycling D-aminoacyl-tRNA to D-amino acids and free tRNA molecules, this enzyme counteracts the toxicity associated with the formation of D-aminoacyl-tRNA entities in vivo and helps enforce protein L-homochirality.</text>
</comment>
<comment type="catalytic activity">
    <reaction evidence="1">
        <text>glycyl-tRNA(Ala) + H2O = tRNA(Ala) + glycine + H(+)</text>
        <dbReference type="Rhea" id="RHEA:53744"/>
        <dbReference type="Rhea" id="RHEA-COMP:9657"/>
        <dbReference type="Rhea" id="RHEA-COMP:13640"/>
        <dbReference type="ChEBI" id="CHEBI:15377"/>
        <dbReference type="ChEBI" id="CHEBI:15378"/>
        <dbReference type="ChEBI" id="CHEBI:57305"/>
        <dbReference type="ChEBI" id="CHEBI:78442"/>
        <dbReference type="ChEBI" id="CHEBI:78522"/>
        <dbReference type="EC" id="3.1.1.96"/>
    </reaction>
</comment>
<comment type="catalytic activity">
    <reaction evidence="1">
        <text>a D-aminoacyl-tRNA + H2O = a tRNA + a D-alpha-amino acid + H(+)</text>
        <dbReference type="Rhea" id="RHEA:13953"/>
        <dbReference type="Rhea" id="RHEA-COMP:10123"/>
        <dbReference type="Rhea" id="RHEA-COMP:10124"/>
        <dbReference type="ChEBI" id="CHEBI:15377"/>
        <dbReference type="ChEBI" id="CHEBI:15378"/>
        <dbReference type="ChEBI" id="CHEBI:59871"/>
        <dbReference type="ChEBI" id="CHEBI:78442"/>
        <dbReference type="ChEBI" id="CHEBI:79333"/>
        <dbReference type="EC" id="3.1.1.96"/>
    </reaction>
</comment>
<comment type="subunit">
    <text evidence="1">Homodimer.</text>
</comment>
<comment type="subcellular location">
    <subcellularLocation>
        <location evidence="1">Cytoplasm</location>
    </subcellularLocation>
</comment>
<comment type="domain">
    <text evidence="1">A Gly-cisPro motif from one monomer fits into the active site of the other monomer to allow specific chiral rejection of L-amino acids.</text>
</comment>
<comment type="similarity">
    <text evidence="1">Belongs to the DTD family.</text>
</comment>
<gene>
    <name evidence="1" type="primary">dtd</name>
    <name type="ordered locus">CA_C2273</name>
</gene>
<evidence type="ECO:0000255" key="1">
    <source>
        <dbReference type="HAMAP-Rule" id="MF_00518"/>
    </source>
</evidence>
<proteinExistence type="inferred from homology"/>
<reference key="1">
    <citation type="journal article" date="2001" name="J. Bacteriol.">
        <title>Genome sequence and comparative analysis of the solvent-producing bacterium Clostridium acetobutylicum.</title>
        <authorList>
            <person name="Noelling J."/>
            <person name="Breton G."/>
            <person name="Omelchenko M.V."/>
            <person name="Makarova K.S."/>
            <person name="Zeng Q."/>
            <person name="Gibson R."/>
            <person name="Lee H.M."/>
            <person name="Dubois J."/>
            <person name="Qiu D."/>
            <person name="Hitti J."/>
            <person name="Wolf Y.I."/>
            <person name="Tatusov R.L."/>
            <person name="Sabathe F."/>
            <person name="Doucette-Stamm L.A."/>
            <person name="Soucaille P."/>
            <person name="Daly M.J."/>
            <person name="Bennett G.N."/>
            <person name="Koonin E.V."/>
            <person name="Smith D.R."/>
        </authorList>
    </citation>
    <scope>NUCLEOTIDE SEQUENCE [LARGE SCALE GENOMIC DNA]</scope>
    <source>
        <strain>ATCC 824 / DSM 792 / JCM 1419 / IAM 19013 / LMG 5710 / NBRC 13948 / NRRL B-527 / VKM B-1787 / 2291 / W</strain>
    </source>
</reference>
<accession>Q97GU2</accession>